<comment type="function">
    <text evidence="7 8 9">May be involved in eye development.</text>
</comment>
<comment type="subunit">
    <text evidence="6">Interacts with TLE4 and TLE5.</text>
</comment>
<comment type="subcellular location">
    <subcellularLocation>
        <location evidence="2">Nucleus</location>
    </subcellularLocation>
</comment>
<comment type="tissue specificity">
    <text evidence="4 5">In the developing embryo, expressed mainly in the ventral optic stalk, optic chiasma, the neural retina and the primordial tissues that give rise to the pituitary/hypothalamus axis. Not expressed in the lens placode.</text>
</comment>
<comment type="developmental stage">
    <text evidence="4">Expression is first detected in the embryo at 8 dpc.</text>
</comment>
<comment type="similarity">
    <text evidence="10">Belongs to the SIX/Sine oculis homeobox family.</text>
</comment>
<sequence>MFQLPILNFSPQQVAGVCETLEESGDVERLGRFLWSLPVAPAACEALNKNESVLRARAIVAFHGGNYRELYHILENHKFTKESHAKLQALWLEAHYQEAEKLRGRPLGPVDKYRVRKKFPLPRTIWDGEQKTHCFKERTRHLLREWYLQDPYPNPSKKRELAQATGLTPTQVGNWFKNRRQRDRAAAAKNRLQQQVLSQGPGRVLRSEGEGTPEVLGVASSPAASLSSKAATSAISITSSDSECDI</sequence>
<keyword id="KW-0217">Developmental protein</keyword>
<keyword id="KW-0238">DNA-binding</keyword>
<keyword id="KW-0371">Homeobox</keyword>
<keyword id="KW-0539">Nucleus</keyword>
<keyword id="KW-0597">Phosphoprotein</keyword>
<keyword id="KW-1185">Reference proteome</keyword>
<reference evidence="10" key="1">
    <citation type="journal article" date="1998" name="Proc. Natl. Acad. Sci. U.S.A.">
        <title>The optx2 homeobox gene is expressed in early precursors of the eye and activates retina-specific genes.</title>
        <authorList>
            <person name="Toy J."/>
            <person name="Yang J.-M."/>
            <person name="Leppert G.S."/>
            <person name="Sundin O.H."/>
        </authorList>
    </citation>
    <scope>NUCLEOTIDE SEQUENCE [MRNA]</scope>
    <source>
        <strain>C57BL/6J</strain>
    </source>
</reference>
<reference evidence="10" key="2">
    <citation type="journal article" date="1999" name="Mech. Dev.">
        <title>Six6 (Optx2) is a novel murine Six3-related homeobox gene that demarcates the presumptive pituitary/hypothalamic axis and the ventral optic stalk.</title>
        <authorList>
            <person name="Jean D."/>
            <person name="Bernier G."/>
            <person name="Gruss P."/>
        </authorList>
    </citation>
    <scope>NUCLEOTIDE SEQUENCE [MRNA]</scope>
    <scope>TISSUE SPECIFICITY</scope>
    <source>
        <tissue>Eye</tissue>
    </source>
</reference>
<reference evidence="10" key="3">
    <citation type="journal article" date="1999" name="Mech. Dev.">
        <title>Six9 (Optx2), a new member of the Six gene family of transcription factors, is expressed at early stages of vertebrate ocular and pituitary development.</title>
        <authorList>
            <person name="Lopez-Rios J."/>
            <person name="Gallardo E."/>
            <person name="Rodriguez de Cordoba S."/>
            <person name="Bovolenta P."/>
        </authorList>
    </citation>
    <scope>NUCLEOTIDE SEQUENCE [MRNA]</scope>
    <scope>TISSUE SPECIFICITY</scope>
    <scope>DEVELOPMENTAL STAGE</scope>
    <source>
        <strain>BALB/cJ</strain>
        <tissue>Embryonic head</tissue>
    </source>
</reference>
<reference key="4">
    <citation type="journal article" date="2005" name="Science">
        <title>The transcriptional landscape of the mammalian genome.</title>
        <authorList>
            <person name="Carninci P."/>
            <person name="Kasukawa T."/>
            <person name="Katayama S."/>
            <person name="Gough J."/>
            <person name="Frith M.C."/>
            <person name="Maeda N."/>
            <person name="Oyama R."/>
            <person name="Ravasi T."/>
            <person name="Lenhard B."/>
            <person name="Wells C."/>
            <person name="Kodzius R."/>
            <person name="Shimokawa K."/>
            <person name="Bajic V.B."/>
            <person name="Brenner S.E."/>
            <person name="Batalov S."/>
            <person name="Forrest A.R."/>
            <person name="Zavolan M."/>
            <person name="Davis M.J."/>
            <person name="Wilming L.G."/>
            <person name="Aidinis V."/>
            <person name="Allen J.E."/>
            <person name="Ambesi-Impiombato A."/>
            <person name="Apweiler R."/>
            <person name="Aturaliya R.N."/>
            <person name="Bailey T.L."/>
            <person name="Bansal M."/>
            <person name="Baxter L."/>
            <person name="Beisel K.W."/>
            <person name="Bersano T."/>
            <person name="Bono H."/>
            <person name="Chalk A.M."/>
            <person name="Chiu K.P."/>
            <person name="Choudhary V."/>
            <person name="Christoffels A."/>
            <person name="Clutterbuck D.R."/>
            <person name="Crowe M.L."/>
            <person name="Dalla E."/>
            <person name="Dalrymple B.P."/>
            <person name="de Bono B."/>
            <person name="Della Gatta G."/>
            <person name="di Bernardo D."/>
            <person name="Down T."/>
            <person name="Engstrom P."/>
            <person name="Fagiolini M."/>
            <person name="Faulkner G."/>
            <person name="Fletcher C.F."/>
            <person name="Fukushima T."/>
            <person name="Furuno M."/>
            <person name="Futaki S."/>
            <person name="Gariboldi M."/>
            <person name="Georgii-Hemming P."/>
            <person name="Gingeras T.R."/>
            <person name="Gojobori T."/>
            <person name="Green R.E."/>
            <person name="Gustincich S."/>
            <person name="Harbers M."/>
            <person name="Hayashi Y."/>
            <person name="Hensch T.K."/>
            <person name="Hirokawa N."/>
            <person name="Hill D."/>
            <person name="Huminiecki L."/>
            <person name="Iacono M."/>
            <person name="Ikeo K."/>
            <person name="Iwama A."/>
            <person name="Ishikawa T."/>
            <person name="Jakt M."/>
            <person name="Kanapin A."/>
            <person name="Katoh M."/>
            <person name="Kawasawa Y."/>
            <person name="Kelso J."/>
            <person name="Kitamura H."/>
            <person name="Kitano H."/>
            <person name="Kollias G."/>
            <person name="Krishnan S.P."/>
            <person name="Kruger A."/>
            <person name="Kummerfeld S.K."/>
            <person name="Kurochkin I.V."/>
            <person name="Lareau L.F."/>
            <person name="Lazarevic D."/>
            <person name="Lipovich L."/>
            <person name="Liu J."/>
            <person name="Liuni S."/>
            <person name="McWilliam S."/>
            <person name="Madan Babu M."/>
            <person name="Madera M."/>
            <person name="Marchionni L."/>
            <person name="Matsuda H."/>
            <person name="Matsuzawa S."/>
            <person name="Miki H."/>
            <person name="Mignone F."/>
            <person name="Miyake S."/>
            <person name="Morris K."/>
            <person name="Mottagui-Tabar S."/>
            <person name="Mulder N."/>
            <person name="Nakano N."/>
            <person name="Nakauchi H."/>
            <person name="Ng P."/>
            <person name="Nilsson R."/>
            <person name="Nishiguchi S."/>
            <person name="Nishikawa S."/>
            <person name="Nori F."/>
            <person name="Ohara O."/>
            <person name="Okazaki Y."/>
            <person name="Orlando V."/>
            <person name="Pang K.C."/>
            <person name="Pavan W.J."/>
            <person name="Pavesi G."/>
            <person name="Pesole G."/>
            <person name="Petrovsky N."/>
            <person name="Piazza S."/>
            <person name="Reed J."/>
            <person name="Reid J.F."/>
            <person name="Ring B.Z."/>
            <person name="Ringwald M."/>
            <person name="Rost B."/>
            <person name="Ruan Y."/>
            <person name="Salzberg S.L."/>
            <person name="Sandelin A."/>
            <person name="Schneider C."/>
            <person name="Schoenbach C."/>
            <person name="Sekiguchi K."/>
            <person name="Semple C.A."/>
            <person name="Seno S."/>
            <person name="Sessa L."/>
            <person name="Sheng Y."/>
            <person name="Shibata Y."/>
            <person name="Shimada H."/>
            <person name="Shimada K."/>
            <person name="Silva D."/>
            <person name="Sinclair B."/>
            <person name="Sperling S."/>
            <person name="Stupka E."/>
            <person name="Sugiura K."/>
            <person name="Sultana R."/>
            <person name="Takenaka Y."/>
            <person name="Taki K."/>
            <person name="Tammoja K."/>
            <person name="Tan S.L."/>
            <person name="Tang S."/>
            <person name="Taylor M.S."/>
            <person name="Tegner J."/>
            <person name="Teichmann S.A."/>
            <person name="Ueda H.R."/>
            <person name="van Nimwegen E."/>
            <person name="Verardo R."/>
            <person name="Wei C.L."/>
            <person name="Yagi K."/>
            <person name="Yamanishi H."/>
            <person name="Zabarovsky E."/>
            <person name="Zhu S."/>
            <person name="Zimmer A."/>
            <person name="Hide W."/>
            <person name="Bult C."/>
            <person name="Grimmond S.M."/>
            <person name="Teasdale R.D."/>
            <person name="Liu E.T."/>
            <person name="Brusic V."/>
            <person name="Quackenbush J."/>
            <person name="Wahlestedt C."/>
            <person name="Mattick J.S."/>
            <person name="Hume D.A."/>
            <person name="Kai C."/>
            <person name="Sasaki D."/>
            <person name="Tomaru Y."/>
            <person name="Fukuda S."/>
            <person name="Kanamori-Katayama M."/>
            <person name="Suzuki M."/>
            <person name="Aoki J."/>
            <person name="Arakawa T."/>
            <person name="Iida J."/>
            <person name="Imamura K."/>
            <person name="Itoh M."/>
            <person name="Kato T."/>
            <person name="Kawaji H."/>
            <person name="Kawagashira N."/>
            <person name="Kawashima T."/>
            <person name="Kojima M."/>
            <person name="Kondo S."/>
            <person name="Konno H."/>
            <person name="Nakano K."/>
            <person name="Ninomiya N."/>
            <person name="Nishio T."/>
            <person name="Okada M."/>
            <person name="Plessy C."/>
            <person name="Shibata K."/>
            <person name="Shiraki T."/>
            <person name="Suzuki S."/>
            <person name="Tagami M."/>
            <person name="Waki K."/>
            <person name="Watahiki A."/>
            <person name="Okamura-Oho Y."/>
            <person name="Suzuki H."/>
            <person name="Kawai J."/>
            <person name="Hayashizaki Y."/>
        </authorList>
    </citation>
    <scope>NUCLEOTIDE SEQUENCE [LARGE SCALE MRNA]</scope>
    <source>
        <strain>C57BL/6J</strain>
        <tissue>Head</tissue>
    </source>
</reference>
<reference key="5">
    <citation type="journal article" date="2002" name="Development">
        <title>Six3-mediated auto repression and eye development requires its interaction with members of the Groucho-related family of co-repressors.</title>
        <authorList>
            <person name="Zhu C.C."/>
            <person name="Dyer M.A."/>
            <person name="Uchikawa M."/>
            <person name="Kondoh H."/>
            <person name="Lagutin O.V."/>
            <person name="Oliver G."/>
        </authorList>
    </citation>
    <scope>INTERACTION WITH TLE5 AND TLE4</scope>
</reference>
<evidence type="ECO:0000250" key="1">
    <source>
        <dbReference type="UniProtKB" id="O95475"/>
    </source>
</evidence>
<evidence type="ECO:0000255" key="2">
    <source>
        <dbReference type="PROSITE-ProRule" id="PRU00108"/>
    </source>
</evidence>
<evidence type="ECO:0000256" key="3">
    <source>
        <dbReference type="SAM" id="MobiDB-lite"/>
    </source>
</evidence>
<evidence type="ECO:0000269" key="4">
    <source>
    </source>
</evidence>
<evidence type="ECO:0000269" key="5">
    <source>
    </source>
</evidence>
<evidence type="ECO:0000269" key="6">
    <source>
    </source>
</evidence>
<evidence type="ECO:0000303" key="7">
    <source>
    </source>
</evidence>
<evidence type="ECO:0000303" key="8">
    <source>
    </source>
</evidence>
<evidence type="ECO:0000303" key="9">
    <source>
    </source>
</evidence>
<evidence type="ECO:0000305" key="10"/>
<evidence type="ECO:0000312" key="11">
    <source>
        <dbReference type="EMBL" id="CAA09775.1"/>
    </source>
</evidence>
<protein>
    <recommendedName>
        <fullName>Homeobox protein SIX6</fullName>
    </recommendedName>
    <alternativeName>
        <fullName>Optic homeobox 2</fullName>
    </alternativeName>
    <alternativeName>
        <fullName>Sine oculis homeobox homolog 6</fullName>
    </alternativeName>
    <alternativeName>
        <fullName>Six9 protein</fullName>
    </alternativeName>
</protein>
<name>SIX6_MOUSE</name>
<feature type="chain" id="PRO_0000049308" description="Homeobox protein SIX6">
    <location>
        <begin position="1"/>
        <end position="246"/>
    </location>
</feature>
<feature type="DNA-binding region" description="Homeobox" evidence="2">
    <location>
        <begin position="126"/>
        <end position="186"/>
    </location>
</feature>
<feature type="region of interest" description="Disordered" evidence="3">
    <location>
        <begin position="190"/>
        <end position="246"/>
    </location>
</feature>
<feature type="compositionally biased region" description="Low complexity" evidence="3">
    <location>
        <begin position="219"/>
        <end position="246"/>
    </location>
</feature>
<feature type="modified residue" description="Phosphothreonine" evidence="1">
    <location>
        <position position="212"/>
    </location>
</feature>
<feature type="modified residue" description="Phosphoserine" evidence="1">
    <location>
        <position position="221"/>
    </location>
</feature>
<feature type="modified residue" description="Phosphoserine" evidence="1">
    <location>
        <position position="225"/>
    </location>
</feature>
<feature type="modified residue" description="Phosphoserine" evidence="1">
    <location>
        <position position="227"/>
    </location>
</feature>
<feature type="modified residue" description="Phosphoserine" evidence="1">
    <location>
        <position position="228"/>
    </location>
</feature>
<feature type="sequence conflict" description="In Ref. 3; CAA09775." evidence="10" ref="3">
    <original>H</original>
    <variation>N</variation>
    <location>
        <position position="141"/>
    </location>
</feature>
<feature type="sequence conflict" description="In Ref. 3; CAA09775." evidence="10" ref="3">
    <original>S</original>
    <variation>T</variation>
    <location>
        <position position="220"/>
    </location>
</feature>
<gene>
    <name type="primary">Six6</name>
    <name type="synonym">Optx2</name>
    <name type="synonym">Six9</name>
</gene>
<dbReference type="EMBL" id="AF050130">
    <property type="protein sequence ID" value="AAC33850.1"/>
    <property type="molecule type" value="mRNA"/>
</dbReference>
<dbReference type="EMBL" id="AF135267">
    <property type="protein sequence ID" value="AAD48911.1"/>
    <property type="molecule type" value="mRNA"/>
</dbReference>
<dbReference type="EMBL" id="AJ011787">
    <property type="protein sequence ID" value="CAA09775.1"/>
    <property type="molecule type" value="mRNA"/>
</dbReference>
<dbReference type="EMBL" id="AK017544">
    <property type="status" value="NOT_ANNOTATED_CDS"/>
    <property type="molecule type" value="mRNA"/>
</dbReference>
<dbReference type="EMBL" id="AK029309">
    <property type="protein sequence ID" value="BAC26387.1"/>
    <property type="molecule type" value="mRNA"/>
</dbReference>
<dbReference type="CCDS" id="CCDS25972.1"/>
<dbReference type="RefSeq" id="NP_035514.1">
    <property type="nucleotide sequence ID" value="NM_011384.5"/>
</dbReference>
<dbReference type="SMR" id="Q9QZ28"/>
<dbReference type="BioGRID" id="203264">
    <property type="interactions" value="5"/>
</dbReference>
<dbReference type="FunCoup" id="Q9QZ28">
    <property type="interactions" value="457"/>
</dbReference>
<dbReference type="IntAct" id="Q9QZ28">
    <property type="interactions" value="5"/>
</dbReference>
<dbReference type="STRING" id="10090.ENSMUSP00000021519"/>
<dbReference type="PhosphoSitePlus" id="Q9QZ28"/>
<dbReference type="PaxDb" id="10090-ENSMUSP00000021519"/>
<dbReference type="ProteomicsDB" id="261050"/>
<dbReference type="Antibodypedia" id="40">
    <property type="antibodies" value="161 antibodies from 29 providers"/>
</dbReference>
<dbReference type="DNASU" id="20476"/>
<dbReference type="Ensembl" id="ENSMUST00000021519.7">
    <property type="protein sequence ID" value="ENSMUSP00000021519.5"/>
    <property type="gene ID" value="ENSMUSG00000021099.7"/>
</dbReference>
<dbReference type="GeneID" id="20476"/>
<dbReference type="KEGG" id="mmu:20476"/>
<dbReference type="UCSC" id="uc007nvy.1">
    <property type="organism name" value="mouse"/>
</dbReference>
<dbReference type="AGR" id="MGI:1341840"/>
<dbReference type="CTD" id="4990"/>
<dbReference type="MGI" id="MGI:1341840">
    <property type="gene designation" value="Six6"/>
</dbReference>
<dbReference type="VEuPathDB" id="HostDB:ENSMUSG00000021099"/>
<dbReference type="eggNOG" id="KOG0775">
    <property type="taxonomic scope" value="Eukaryota"/>
</dbReference>
<dbReference type="GeneTree" id="ENSGT00940000160091"/>
<dbReference type="HOGENOM" id="CLU_046914_0_1_1"/>
<dbReference type="InParanoid" id="Q9QZ28"/>
<dbReference type="OMA" id="PAGICCV"/>
<dbReference type="OrthoDB" id="3501850at2759"/>
<dbReference type="PhylomeDB" id="Q9QZ28"/>
<dbReference type="TreeFam" id="TF315545"/>
<dbReference type="BioGRID-ORCS" id="20476">
    <property type="hits" value="1 hit in 77 CRISPR screens"/>
</dbReference>
<dbReference type="ChiTaRS" id="Six6">
    <property type="organism name" value="mouse"/>
</dbReference>
<dbReference type="PRO" id="PR:Q9QZ28"/>
<dbReference type="Proteomes" id="UP000000589">
    <property type="component" value="Chromosome 12"/>
</dbReference>
<dbReference type="RNAct" id="Q9QZ28">
    <property type="molecule type" value="protein"/>
</dbReference>
<dbReference type="Bgee" id="ENSMUSG00000021099">
    <property type="expression patterns" value="Expressed in optic fissure and 66 other cell types or tissues"/>
</dbReference>
<dbReference type="ExpressionAtlas" id="Q9QZ28">
    <property type="expression patterns" value="baseline and differential"/>
</dbReference>
<dbReference type="GO" id="GO:0005634">
    <property type="term" value="C:nucleus"/>
    <property type="evidence" value="ECO:0007669"/>
    <property type="project" value="UniProtKB-SubCell"/>
</dbReference>
<dbReference type="GO" id="GO:0000978">
    <property type="term" value="F:RNA polymerase II cis-regulatory region sequence-specific DNA binding"/>
    <property type="evidence" value="ECO:0000314"/>
    <property type="project" value="MGI"/>
</dbReference>
<dbReference type="CDD" id="cd00086">
    <property type="entry name" value="homeodomain"/>
    <property type="match status" value="1"/>
</dbReference>
<dbReference type="FunFam" id="1.10.10.60:FF:000046">
    <property type="entry name" value="SIX homeobox 3"/>
    <property type="match status" value="1"/>
</dbReference>
<dbReference type="Gene3D" id="1.10.10.60">
    <property type="entry name" value="Homeodomain-like"/>
    <property type="match status" value="1"/>
</dbReference>
<dbReference type="InterPro" id="IPR001356">
    <property type="entry name" value="HD"/>
</dbReference>
<dbReference type="InterPro" id="IPR009057">
    <property type="entry name" value="Homeodomain-like_sf"/>
</dbReference>
<dbReference type="InterPro" id="IPR031701">
    <property type="entry name" value="SIX1_SD"/>
</dbReference>
<dbReference type="PANTHER" id="PTHR10390">
    <property type="entry name" value="HOMEOBOX PROTEIN SIX"/>
    <property type="match status" value="1"/>
</dbReference>
<dbReference type="PANTHER" id="PTHR10390:SF12">
    <property type="entry name" value="HOMEOBOX PROTEIN SIX6"/>
    <property type="match status" value="1"/>
</dbReference>
<dbReference type="Pfam" id="PF00046">
    <property type="entry name" value="Homeodomain"/>
    <property type="match status" value="1"/>
</dbReference>
<dbReference type="Pfam" id="PF16878">
    <property type="entry name" value="SIX1_SD"/>
    <property type="match status" value="1"/>
</dbReference>
<dbReference type="SMART" id="SM00389">
    <property type="entry name" value="HOX"/>
    <property type="match status" value="1"/>
</dbReference>
<dbReference type="SUPFAM" id="SSF46689">
    <property type="entry name" value="Homeodomain-like"/>
    <property type="match status" value="1"/>
</dbReference>
<dbReference type="PROSITE" id="PS50071">
    <property type="entry name" value="HOMEOBOX_2"/>
    <property type="match status" value="1"/>
</dbReference>
<proteinExistence type="evidence at protein level"/>
<organism evidence="11">
    <name type="scientific">Mus musculus</name>
    <name type="common">Mouse</name>
    <dbReference type="NCBI Taxonomy" id="10090"/>
    <lineage>
        <taxon>Eukaryota</taxon>
        <taxon>Metazoa</taxon>
        <taxon>Chordata</taxon>
        <taxon>Craniata</taxon>
        <taxon>Vertebrata</taxon>
        <taxon>Euteleostomi</taxon>
        <taxon>Mammalia</taxon>
        <taxon>Eutheria</taxon>
        <taxon>Euarchontoglires</taxon>
        <taxon>Glires</taxon>
        <taxon>Rodentia</taxon>
        <taxon>Myomorpha</taxon>
        <taxon>Muroidea</taxon>
        <taxon>Muridae</taxon>
        <taxon>Murinae</taxon>
        <taxon>Mus</taxon>
        <taxon>Mus</taxon>
    </lineage>
</organism>
<accession>Q9QZ28</accession>
<accession>O88423</accession>